<evidence type="ECO:0000250" key="1">
    <source>
        <dbReference type="UniProtKB" id="Q13427"/>
    </source>
</evidence>
<evidence type="ECO:0000255" key="2">
    <source>
        <dbReference type="PROSITE-ProRule" id="PRU00156"/>
    </source>
</evidence>
<evidence type="ECO:0000256" key="3">
    <source>
        <dbReference type="SAM" id="MobiDB-lite"/>
    </source>
</evidence>
<evidence type="ECO:0000305" key="4"/>
<evidence type="ECO:0007744" key="5">
    <source>
    </source>
</evidence>
<gene>
    <name type="primary">Ppig</name>
</gene>
<keyword id="KW-0413">Isomerase</keyword>
<keyword id="KW-1017">Isopeptide bond</keyword>
<keyword id="KW-0539">Nucleus</keyword>
<keyword id="KW-0597">Phosphoprotein</keyword>
<keyword id="KW-1185">Reference proteome</keyword>
<keyword id="KW-0697">Rotamase</keyword>
<keyword id="KW-0832">Ubl conjugation</keyword>
<protein>
    <recommendedName>
        <fullName>Peptidyl-prolyl cis-trans isomerase G</fullName>
        <shortName>PPIase G</shortName>
        <shortName>Peptidyl-prolyl isomerase G</shortName>
        <ecNumber evidence="1">5.2.1.8</ecNumber>
    </recommendedName>
    <alternativeName>
        <fullName>Cyclophilin G</fullName>
    </alternativeName>
    <alternativeName>
        <fullName>Rotamase G</fullName>
    </alternativeName>
</protein>
<sequence>MGIKVQRPRCFFDIAINNQPAGRVVFELFSDVCPKTCENFRCLCTGEKGTGKSTQKPLHYKSCLFHRVVKDFMVQGGDFSEGNGRGGESIYGGFFEDESFAVKHNKEFLLSMANRGKDTNGSQFFITTKPTPHLDGHHVVFGQVISGQEVVREIENQKTDAASKPFAEVRILSCGELIPKSKVKKEEKKRHKSSSSSSSSDSDSSSDSQSSSESSDSESASEEKSRKRKKKHRKNSRKHKKEKKKRKKSKKSPSSESEAENVDAQPQSTVRPEEIPPIPENRFLMRKSPPKADDKERKNRERERERECNPPNSQPASYQRRFLVTRSGRKIKGRGPRRYRTPSRSRSRDRFRRSETPPHWRQEMQRAQRMRVSSGERWIKGDKSELNEIKENQRSPVRVKEKKITDHRHMSESPNRKVEKEKKAKDHKSESKERDIRRNSEKDDKYNKNKVKKRGKSKSRSKSKERSKSKERDSKHSRHEDKRVRSRSKERDHETTKEKEKPLDPKGKDQERSRSKENSKQVESKSNEHDHSKSKEKDRRAQSRSRERDLTKSKHSYNSRTRERSRSRDRSRRVRSRSHDRDRSRSKEYHRYREQEYRRRGRSRSRDRRTPGRSRSKDRRRRRRDSRSSEREESQSRNKDKYRSQESKSSHRKENSEGEKRTYSKSRDHNSSSNNREKKADREQSPVSKTKQSSQDNEVKSSTLKNQEDEKTRSPVEKENQKSKGQENDHVHDKNKKCDHESSPGTDEDKSG</sequence>
<feature type="chain" id="PRO_0000282597" description="Peptidyl-prolyl cis-trans isomerase G">
    <location>
        <begin position="1"/>
        <end position="752"/>
    </location>
</feature>
<feature type="domain" description="PPIase cyclophilin-type" evidence="2">
    <location>
        <begin position="11"/>
        <end position="176"/>
    </location>
</feature>
<feature type="region of interest" description="Disordered" evidence="3">
    <location>
        <begin position="182"/>
        <end position="752"/>
    </location>
</feature>
<feature type="compositionally biased region" description="Basic residues" evidence="3">
    <location>
        <begin position="182"/>
        <end position="193"/>
    </location>
</feature>
<feature type="compositionally biased region" description="Low complexity" evidence="3">
    <location>
        <begin position="194"/>
        <end position="214"/>
    </location>
</feature>
<feature type="compositionally biased region" description="Basic residues" evidence="3">
    <location>
        <begin position="226"/>
        <end position="251"/>
    </location>
</feature>
<feature type="compositionally biased region" description="Basic and acidic residues" evidence="3">
    <location>
        <begin position="290"/>
        <end position="308"/>
    </location>
</feature>
<feature type="compositionally biased region" description="Basic residues" evidence="3">
    <location>
        <begin position="327"/>
        <end position="345"/>
    </location>
</feature>
<feature type="compositionally biased region" description="Basic and acidic residues" evidence="3">
    <location>
        <begin position="346"/>
        <end position="366"/>
    </location>
</feature>
<feature type="compositionally biased region" description="Basic and acidic residues" evidence="3">
    <location>
        <begin position="377"/>
        <end position="447"/>
    </location>
</feature>
<feature type="compositionally biased region" description="Basic residues" evidence="3">
    <location>
        <begin position="448"/>
        <end position="461"/>
    </location>
</feature>
<feature type="compositionally biased region" description="Basic and acidic residues" evidence="3">
    <location>
        <begin position="462"/>
        <end position="552"/>
    </location>
</feature>
<feature type="compositionally biased region" description="Basic and acidic residues" evidence="3">
    <location>
        <begin position="577"/>
        <end position="598"/>
    </location>
</feature>
<feature type="compositionally biased region" description="Basic residues" evidence="3">
    <location>
        <begin position="599"/>
        <end position="625"/>
    </location>
</feature>
<feature type="compositionally biased region" description="Basic and acidic residues" evidence="3">
    <location>
        <begin position="626"/>
        <end position="684"/>
    </location>
</feature>
<feature type="compositionally biased region" description="Polar residues" evidence="3">
    <location>
        <begin position="685"/>
        <end position="705"/>
    </location>
</feature>
<feature type="compositionally biased region" description="Basic and acidic residues" evidence="3">
    <location>
        <begin position="706"/>
        <end position="752"/>
    </location>
</feature>
<feature type="modified residue" description="Phosphoserine" evidence="1">
    <location>
        <position position="252"/>
    </location>
</feature>
<feature type="modified residue" description="Phosphoserine" evidence="5">
    <location>
        <position position="254"/>
    </location>
</feature>
<feature type="modified residue" description="Phosphoserine" evidence="5">
    <location>
        <position position="255"/>
    </location>
</feature>
<feature type="modified residue" description="Phosphoserine" evidence="5">
    <location>
        <position position="257"/>
    </location>
</feature>
<feature type="modified residue" description="Phosphoserine" evidence="1">
    <location>
        <position position="288"/>
    </location>
</feature>
<feature type="modified residue" description="Phosphoserine" evidence="1">
    <location>
        <position position="313"/>
    </location>
</feature>
<feature type="modified residue" description="Phosphoserine" evidence="1">
    <location>
        <position position="354"/>
    </location>
</feature>
<feature type="modified residue" description="Phosphothreonine" evidence="1">
    <location>
        <position position="356"/>
    </location>
</feature>
<feature type="modified residue" description="Phosphoserine" evidence="1">
    <location>
        <position position="384"/>
    </location>
</feature>
<feature type="modified residue" description="Phosphoserine" evidence="1">
    <location>
        <position position="395"/>
    </location>
</feature>
<feature type="modified residue" description="Phosphoserine" evidence="1">
    <location>
        <position position="411"/>
    </location>
</feature>
<feature type="modified residue" description="Phosphoserine" evidence="1">
    <location>
        <position position="413"/>
    </location>
</feature>
<feature type="modified residue" description="Phosphoserine" evidence="1">
    <location>
        <position position="685"/>
    </location>
</feature>
<feature type="modified residue" description="Phosphoserine" evidence="1">
    <location>
        <position position="688"/>
    </location>
</feature>
<feature type="modified residue" description="Phosphoserine" evidence="1">
    <location>
        <position position="694"/>
    </location>
</feature>
<feature type="modified residue" description="Phosphoserine" evidence="1">
    <location>
        <position position="742"/>
    </location>
</feature>
<feature type="modified residue" description="Phosphoserine" evidence="1">
    <location>
        <position position="743"/>
    </location>
</feature>
<feature type="modified residue" description="Phosphothreonine" evidence="1">
    <location>
        <position position="746"/>
    </location>
</feature>
<feature type="modified residue" description="Phosphoserine" evidence="1">
    <location>
        <position position="751"/>
    </location>
</feature>
<feature type="cross-link" description="Glycyl lysine isopeptide (Lys-Gly) (interchain with G-Cter in SUMO2)" evidence="1">
    <location>
        <position position="390"/>
    </location>
</feature>
<feature type="cross-link" description="Glycyl lysine isopeptide (Lys-Gly) (interchain with G-Cter in SUMO2)" evidence="1">
    <location>
        <position position="691"/>
    </location>
</feature>
<feature type="sequence conflict" description="In Ref. 2; AAC05726." evidence="4" ref="2">
    <location>
        <position position="21"/>
    </location>
</feature>
<dbReference type="EC" id="5.2.1.8" evidence="1"/>
<dbReference type="EMBL" id="AL845261">
    <property type="status" value="NOT_ANNOTATED_CDS"/>
    <property type="molecule type" value="Genomic_DNA"/>
</dbReference>
<dbReference type="EMBL" id="U91923">
    <property type="protein sequence ID" value="AAC05726.1"/>
    <property type="molecule type" value="mRNA"/>
</dbReference>
<dbReference type="EMBL" id="AK135713">
    <property type="protein sequence ID" value="BAE22623.1"/>
    <property type="molecule type" value="mRNA"/>
</dbReference>
<dbReference type="EMBL" id="AK164670">
    <property type="protein sequence ID" value="BAE37869.1"/>
    <property type="molecule type" value="mRNA"/>
</dbReference>
<dbReference type="CCDS" id="CCDS38137.1"/>
<dbReference type="RefSeq" id="NP_001074555.1">
    <property type="nucleotide sequence ID" value="NM_001081086.2"/>
</dbReference>
<dbReference type="RefSeq" id="NP_001394390.1">
    <property type="nucleotide sequence ID" value="NM_001407461.1"/>
</dbReference>
<dbReference type="RefSeq" id="NP_001394391.1">
    <property type="nucleotide sequence ID" value="NM_001407462.1"/>
</dbReference>
<dbReference type="RefSeq" id="NP_001394392.1">
    <property type="nucleotide sequence ID" value="NM_001407463.1"/>
</dbReference>
<dbReference type="RefSeq" id="NP_001394393.1">
    <property type="nucleotide sequence ID" value="NM_001407464.1"/>
</dbReference>
<dbReference type="RefSeq" id="NP_001394394.1">
    <property type="nucleotide sequence ID" value="NM_001407465.1"/>
</dbReference>
<dbReference type="RefSeq" id="NP_001394395.1">
    <property type="nucleotide sequence ID" value="NM_001407466.1"/>
</dbReference>
<dbReference type="RefSeq" id="XP_006499247.1">
    <property type="nucleotide sequence ID" value="XM_006499184.3"/>
</dbReference>
<dbReference type="RefSeq" id="XP_006499248.1">
    <property type="nucleotide sequence ID" value="XM_006499185.3"/>
</dbReference>
<dbReference type="RefSeq" id="XP_006499249.1">
    <property type="nucleotide sequence ID" value="XM_006499186.2"/>
</dbReference>
<dbReference type="RefSeq" id="XP_006499250.1">
    <property type="nucleotide sequence ID" value="XM_006499187.3"/>
</dbReference>
<dbReference type="SMR" id="A2AR02"/>
<dbReference type="BioGRID" id="230703">
    <property type="interactions" value="4"/>
</dbReference>
<dbReference type="FunCoup" id="A2AR02">
    <property type="interactions" value="4429"/>
</dbReference>
<dbReference type="IntAct" id="A2AR02">
    <property type="interactions" value="1"/>
</dbReference>
<dbReference type="MINT" id="A2AR02"/>
<dbReference type="STRING" id="10090.ENSMUSP00000045945"/>
<dbReference type="GlyGen" id="A2AR02">
    <property type="glycosylation" value="1 site, 1 O-linked glycan (1 site)"/>
</dbReference>
<dbReference type="iPTMnet" id="A2AR02"/>
<dbReference type="PhosphoSitePlus" id="A2AR02"/>
<dbReference type="jPOST" id="A2AR02"/>
<dbReference type="PaxDb" id="10090-ENSMUSP00000045945"/>
<dbReference type="PeptideAtlas" id="A2AR02"/>
<dbReference type="ProteomicsDB" id="289805"/>
<dbReference type="Pumba" id="A2AR02"/>
<dbReference type="Antibodypedia" id="19292">
    <property type="antibodies" value="282 antibodies from 33 providers"/>
</dbReference>
<dbReference type="Ensembl" id="ENSMUST00000040915.15">
    <property type="protein sequence ID" value="ENSMUSP00000045945.9"/>
    <property type="gene ID" value="ENSMUSG00000042133.17"/>
</dbReference>
<dbReference type="Ensembl" id="ENSMUST00000090858.10">
    <property type="protein sequence ID" value="ENSMUSP00000088370.4"/>
    <property type="gene ID" value="ENSMUSG00000042133.17"/>
</dbReference>
<dbReference type="GeneID" id="228005"/>
<dbReference type="KEGG" id="mmu:228005"/>
<dbReference type="UCSC" id="uc008jyl.1">
    <property type="organism name" value="mouse"/>
</dbReference>
<dbReference type="AGR" id="MGI:2445173"/>
<dbReference type="CTD" id="9360"/>
<dbReference type="MGI" id="MGI:2445173">
    <property type="gene designation" value="Ppig"/>
</dbReference>
<dbReference type="VEuPathDB" id="HostDB:ENSMUSG00000042133"/>
<dbReference type="eggNOG" id="KOG0546">
    <property type="taxonomic scope" value="Eukaryota"/>
</dbReference>
<dbReference type="GeneTree" id="ENSGT00940000157954"/>
<dbReference type="HOGENOM" id="CLU_012062_33_6_1"/>
<dbReference type="InParanoid" id="A2AR02"/>
<dbReference type="OMA" id="NQNQFNR"/>
<dbReference type="OrthoDB" id="6630374at2759"/>
<dbReference type="PhylomeDB" id="A2AR02"/>
<dbReference type="TreeFam" id="TF318563"/>
<dbReference type="BioGRID-ORCS" id="228005">
    <property type="hits" value="13 hits in 77 CRISPR screens"/>
</dbReference>
<dbReference type="ChiTaRS" id="Ppig">
    <property type="organism name" value="mouse"/>
</dbReference>
<dbReference type="PRO" id="PR:A2AR02"/>
<dbReference type="Proteomes" id="UP000000589">
    <property type="component" value="Chromosome 2"/>
</dbReference>
<dbReference type="RNAct" id="A2AR02">
    <property type="molecule type" value="protein"/>
</dbReference>
<dbReference type="Bgee" id="ENSMUSG00000042133">
    <property type="expression patterns" value="Expressed in animal zygote and 251 other cell types or tissues"/>
</dbReference>
<dbReference type="ExpressionAtlas" id="A2AR02">
    <property type="expression patterns" value="baseline and differential"/>
</dbReference>
<dbReference type="GO" id="GO:0005829">
    <property type="term" value="C:cytosol"/>
    <property type="evidence" value="ECO:0007669"/>
    <property type="project" value="Ensembl"/>
</dbReference>
<dbReference type="GO" id="GO:0016363">
    <property type="term" value="C:nuclear matrix"/>
    <property type="evidence" value="ECO:0007669"/>
    <property type="project" value="UniProtKB-SubCell"/>
</dbReference>
<dbReference type="GO" id="GO:0016607">
    <property type="term" value="C:nuclear speck"/>
    <property type="evidence" value="ECO:0007669"/>
    <property type="project" value="UniProtKB-SubCell"/>
</dbReference>
<dbReference type="GO" id="GO:0003755">
    <property type="term" value="F:peptidyl-prolyl cis-trans isomerase activity"/>
    <property type="evidence" value="ECO:0000250"/>
    <property type="project" value="UniProtKB"/>
</dbReference>
<dbReference type="GO" id="GO:0006457">
    <property type="term" value="P:protein folding"/>
    <property type="evidence" value="ECO:0007669"/>
    <property type="project" value="InterPro"/>
</dbReference>
<dbReference type="FunFam" id="2.40.100.10:FF:000005">
    <property type="entry name" value="Peptidyl-prolyl cis-trans isomerase G"/>
    <property type="match status" value="1"/>
</dbReference>
<dbReference type="Gene3D" id="2.40.100.10">
    <property type="entry name" value="Cyclophilin-like"/>
    <property type="match status" value="1"/>
</dbReference>
<dbReference type="InterPro" id="IPR029000">
    <property type="entry name" value="Cyclophilin-like_dom_sf"/>
</dbReference>
<dbReference type="InterPro" id="IPR020892">
    <property type="entry name" value="Cyclophilin-type_PPIase_CS"/>
</dbReference>
<dbReference type="InterPro" id="IPR002130">
    <property type="entry name" value="Cyclophilin-type_PPIase_dom"/>
</dbReference>
<dbReference type="PANTHER" id="PTHR11071">
    <property type="entry name" value="PEPTIDYL-PROLYL CIS-TRANS ISOMERASE"/>
    <property type="match status" value="1"/>
</dbReference>
<dbReference type="PANTHER" id="PTHR11071:SF292">
    <property type="entry name" value="PEPTIDYL-PROLYL CIS-TRANS ISOMERASE G"/>
    <property type="match status" value="1"/>
</dbReference>
<dbReference type="Pfam" id="PF00160">
    <property type="entry name" value="Pro_isomerase"/>
    <property type="match status" value="1"/>
</dbReference>
<dbReference type="PRINTS" id="PR00153">
    <property type="entry name" value="CSAPPISMRASE"/>
</dbReference>
<dbReference type="SUPFAM" id="SSF50891">
    <property type="entry name" value="Cyclophilin-like"/>
    <property type="match status" value="1"/>
</dbReference>
<dbReference type="PROSITE" id="PS00170">
    <property type="entry name" value="CSA_PPIASE_1"/>
    <property type="match status" value="1"/>
</dbReference>
<dbReference type="PROSITE" id="PS50072">
    <property type="entry name" value="CSA_PPIASE_2"/>
    <property type="match status" value="1"/>
</dbReference>
<proteinExistence type="evidence at protein level"/>
<organism>
    <name type="scientific">Mus musculus</name>
    <name type="common">Mouse</name>
    <dbReference type="NCBI Taxonomy" id="10090"/>
    <lineage>
        <taxon>Eukaryota</taxon>
        <taxon>Metazoa</taxon>
        <taxon>Chordata</taxon>
        <taxon>Craniata</taxon>
        <taxon>Vertebrata</taxon>
        <taxon>Euteleostomi</taxon>
        <taxon>Mammalia</taxon>
        <taxon>Eutheria</taxon>
        <taxon>Euarchontoglires</taxon>
        <taxon>Glires</taxon>
        <taxon>Rodentia</taxon>
        <taxon>Myomorpha</taxon>
        <taxon>Muroidea</taxon>
        <taxon>Muridae</taxon>
        <taxon>Murinae</taxon>
        <taxon>Mus</taxon>
        <taxon>Mus</taxon>
    </lineage>
</organism>
<accession>A2AR02</accession>
<accession>O70134</accession>
<accession>Q3TP68</accession>
<accession>Q3UXE0</accession>
<name>PPIG_MOUSE</name>
<comment type="function">
    <text evidence="1">PPIase that catalyzes the cis-trans isomerization of proline imidic peptide bonds in oligopeptides and may therefore assist protein folding. May be implicated in the folding, transport, and assembly of proteins. May play an important role in the regulation of pre-mRNA splicing.</text>
</comment>
<comment type="catalytic activity">
    <reaction evidence="1">
        <text>[protein]-peptidylproline (omega=180) = [protein]-peptidylproline (omega=0)</text>
        <dbReference type="Rhea" id="RHEA:16237"/>
        <dbReference type="Rhea" id="RHEA-COMP:10747"/>
        <dbReference type="Rhea" id="RHEA-COMP:10748"/>
        <dbReference type="ChEBI" id="CHEBI:83833"/>
        <dbReference type="ChEBI" id="CHEBI:83834"/>
        <dbReference type="EC" id="5.2.1.8"/>
    </reaction>
</comment>
<comment type="activity regulation">
    <text evidence="1">Inhibited by cyclosporin A (CsA).</text>
</comment>
<comment type="subunit">
    <text evidence="1">Interacts with CLK1, PNN and with the phosphorylated C-terminal domain of RNA polymerase II.</text>
</comment>
<comment type="subcellular location">
    <subcellularLocation>
        <location evidence="1">Nucleus matrix</location>
    </subcellularLocation>
    <subcellularLocation>
        <location evidence="1">Nucleus speckle</location>
    </subcellularLocation>
    <text evidence="1">Colocalizes with splicing factors at nuclear speckles.</text>
</comment>
<comment type="domain">
    <text evidence="1">The RS domain is required for the interaction with the phosphorylated C-terminal domain of RNA polymerase II.</text>
</comment>
<reference key="1">
    <citation type="journal article" date="2009" name="PLoS Biol.">
        <title>Lineage-specific biology revealed by a finished genome assembly of the mouse.</title>
        <authorList>
            <person name="Church D.M."/>
            <person name="Goodstadt L."/>
            <person name="Hillier L.W."/>
            <person name="Zody M.C."/>
            <person name="Goldstein S."/>
            <person name="She X."/>
            <person name="Bult C.J."/>
            <person name="Agarwala R."/>
            <person name="Cherry J.L."/>
            <person name="DiCuccio M."/>
            <person name="Hlavina W."/>
            <person name="Kapustin Y."/>
            <person name="Meric P."/>
            <person name="Maglott D."/>
            <person name="Birtle Z."/>
            <person name="Marques A.C."/>
            <person name="Graves T."/>
            <person name="Zhou S."/>
            <person name="Teague B."/>
            <person name="Potamousis K."/>
            <person name="Churas C."/>
            <person name="Place M."/>
            <person name="Herschleb J."/>
            <person name="Runnheim R."/>
            <person name="Forrest D."/>
            <person name="Amos-Landgraf J."/>
            <person name="Schwartz D.C."/>
            <person name="Cheng Z."/>
            <person name="Lindblad-Toh K."/>
            <person name="Eichler E.E."/>
            <person name="Ponting C.P."/>
        </authorList>
    </citation>
    <scope>NUCLEOTIDE SEQUENCE [LARGE SCALE GENOMIC DNA]</scope>
    <source>
        <strain>C57BL/6J</strain>
    </source>
</reference>
<reference key="2">
    <citation type="submission" date="1997-03" db="EMBL/GenBank/DDBJ databases">
        <authorList>
            <person name="Lee C.G."/>
            <person name="Hurwitz J."/>
        </authorList>
    </citation>
    <scope>NUCLEOTIDE SEQUENCE [MRNA] OF 1-74</scope>
    <source>
        <strain>129/Sv</strain>
    </source>
</reference>
<reference key="3">
    <citation type="journal article" date="2005" name="Science">
        <title>The transcriptional landscape of the mammalian genome.</title>
        <authorList>
            <person name="Carninci P."/>
            <person name="Kasukawa T."/>
            <person name="Katayama S."/>
            <person name="Gough J."/>
            <person name="Frith M.C."/>
            <person name="Maeda N."/>
            <person name="Oyama R."/>
            <person name="Ravasi T."/>
            <person name="Lenhard B."/>
            <person name="Wells C."/>
            <person name="Kodzius R."/>
            <person name="Shimokawa K."/>
            <person name="Bajic V.B."/>
            <person name="Brenner S.E."/>
            <person name="Batalov S."/>
            <person name="Forrest A.R."/>
            <person name="Zavolan M."/>
            <person name="Davis M.J."/>
            <person name="Wilming L.G."/>
            <person name="Aidinis V."/>
            <person name="Allen J.E."/>
            <person name="Ambesi-Impiombato A."/>
            <person name="Apweiler R."/>
            <person name="Aturaliya R.N."/>
            <person name="Bailey T.L."/>
            <person name="Bansal M."/>
            <person name="Baxter L."/>
            <person name="Beisel K.W."/>
            <person name="Bersano T."/>
            <person name="Bono H."/>
            <person name="Chalk A.M."/>
            <person name="Chiu K.P."/>
            <person name="Choudhary V."/>
            <person name="Christoffels A."/>
            <person name="Clutterbuck D.R."/>
            <person name="Crowe M.L."/>
            <person name="Dalla E."/>
            <person name="Dalrymple B.P."/>
            <person name="de Bono B."/>
            <person name="Della Gatta G."/>
            <person name="di Bernardo D."/>
            <person name="Down T."/>
            <person name="Engstrom P."/>
            <person name="Fagiolini M."/>
            <person name="Faulkner G."/>
            <person name="Fletcher C.F."/>
            <person name="Fukushima T."/>
            <person name="Furuno M."/>
            <person name="Futaki S."/>
            <person name="Gariboldi M."/>
            <person name="Georgii-Hemming P."/>
            <person name="Gingeras T.R."/>
            <person name="Gojobori T."/>
            <person name="Green R.E."/>
            <person name="Gustincich S."/>
            <person name="Harbers M."/>
            <person name="Hayashi Y."/>
            <person name="Hensch T.K."/>
            <person name="Hirokawa N."/>
            <person name="Hill D."/>
            <person name="Huminiecki L."/>
            <person name="Iacono M."/>
            <person name="Ikeo K."/>
            <person name="Iwama A."/>
            <person name="Ishikawa T."/>
            <person name="Jakt M."/>
            <person name="Kanapin A."/>
            <person name="Katoh M."/>
            <person name="Kawasawa Y."/>
            <person name="Kelso J."/>
            <person name="Kitamura H."/>
            <person name="Kitano H."/>
            <person name="Kollias G."/>
            <person name="Krishnan S.P."/>
            <person name="Kruger A."/>
            <person name="Kummerfeld S.K."/>
            <person name="Kurochkin I.V."/>
            <person name="Lareau L.F."/>
            <person name="Lazarevic D."/>
            <person name="Lipovich L."/>
            <person name="Liu J."/>
            <person name="Liuni S."/>
            <person name="McWilliam S."/>
            <person name="Madan Babu M."/>
            <person name="Madera M."/>
            <person name="Marchionni L."/>
            <person name="Matsuda H."/>
            <person name="Matsuzawa S."/>
            <person name="Miki H."/>
            <person name="Mignone F."/>
            <person name="Miyake S."/>
            <person name="Morris K."/>
            <person name="Mottagui-Tabar S."/>
            <person name="Mulder N."/>
            <person name="Nakano N."/>
            <person name="Nakauchi H."/>
            <person name="Ng P."/>
            <person name="Nilsson R."/>
            <person name="Nishiguchi S."/>
            <person name="Nishikawa S."/>
            <person name="Nori F."/>
            <person name="Ohara O."/>
            <person name="Okazaki Y."/>
            <person name="Orlando V."/>
            <person name="Pang K.C."/>
            <person name="Pavan W.J."/>
            <person name="Pavesi G."/>
            <person name="Pesole G."/>
            <person name="Petrovsky N."/>
            <person name="Piazza S."/>
            <person name="Reed J."/>
            <person name="Reid J.F."/>
            <person name="Ring B.Z."/>
            <person name="Ringwald M."/>
            <person name="Rost B."/>
            <person name="Ruan Y."/>
            <person name="Salzberg S.L."/>
            <person name="Sandelin A."/>
            <person name="Schneider C."/>
            <person name="Schoenbach C."/>
            <person name="Sekiguchi K."/>
            <person name="Semple C.A."/>
            <person name="Seno S."/>
            <person name="Sessa L."/>
            <person name="Sheng Y."/>
            <person name="Shibata Y."/>
            <person name="Shimada H."/>
            <person name="Shimada K."/>
            <person name="Silva D."/>
            <person name="Sinclair B."/>
            <person name="Sperling S."/>
            <person name="Stupka E."/>
            <person name="Sugiura K."/>
            <person name="Sultana R."/>
            <person name="Takenaka Y."/>
            <person name="Taki K."/>
            <person name="Tammoja K."/>
            <person name="Tan S.L."/>
            <person name="Tang S."/>
            <person name="Taylor M.S."/>
            <person name="Tegner J."/>
            <person name="Teichmann S.A."/>
            <person name="Ueda H.R."/>
            <person name="van Nimwegen E."/>
            <person name="Verardo R."/>
            <person name="Wei C.L."/>
            <person name="Yagi K."/>
            <person name="Yamanishi H."/>
            <person name="Zabarovsky E."/>
            <person name="Zhu S."/>
            <person name="Zimmer A."/>
            <person name="Hide W."/>
            <person name="Bult C."/>
            <person name="Grimmond S.M."/>
            <person name="Teasdale R.D."/>
            <person name="Liu E.T."/>
            <person name="Brusic V."/>
            <person name="Quackenbush J."/>
            <person name="Wahlestedt C."/>
            <person name="Mattick J.S."/>
            <person name="Hume D.A."/>
            <person name="Kai C."/>
            <person name="Sasaki D."/>
            <person name="Tomaru Y."/>
            <person name="Fukuda S."/>
            <person name="Kanamori-Katayama M."/>
            <person name="Suzuki M."/>
            <person name="Aoki J."/>
            <person name="Arakawa T."/>
            <person name="Iida J."/>
            <person name="Imamura K."/>
            <person name="Itoh M."/>
            <person name="Kato T."/>
            <person name="Kawaji H."/>
            <person name="Kawagashira N."/>
            <person name="Kawashima T."/>
            <person name="Kojima M."/>
            <person name="Kondo S."/>
            <person name="Konno H."/>
            <person name="Nakano K."/>
            <person name="Ninomiya N."/>
            <person name="Nishio T."/>
            <person name="Okada M."/>
            <person name="Plessy C."/>
            <person name="Shibata K."/>
            <person name="Shiraki T."/>
            <person name="Suzuki S."/>
            <person name="Tagami M."/>
            <person name="Waki K."/>
            <person name="Watahiki A."/>
            <person name="Okamura-Oho Y."/>
            <person name="Suzuki H."/>
            <person name="Kawai J."/>
            <person name="Hayashizaki Y."/>
        </authorList>
    </citation>
    <scope>NUCLEOTIDE SEQUENCE [LARGE SCALE MRNA] OF 287-495 AND 549-752</scope>
    <source>
        <strain>C57BL/6J</strain>
        <tissue>Stomach</tissue>
    </source>
</reference>
<reference key="4">
    <citation type="journal article" date="2010" name="Cell">
        <title>A tissue-specific atlas of mouse protein phosphorylation and expression.</title>
        <authorList>
            <person name="Huttlin E.L."/>
            <person name="Jedrychowski M.P."/>
            <person name="Elias J.E."/>
            <person name="Goswami T."/>
            <person name="Rad R."/>
            <person name="Beausoleil S.A."/>
            <person name="Villen J."/>
            <person name="Haas W."/>
            <person name="Sowa M.E."/>
            <person name="Gygi S.P."/>
        </authorList>
    </citation>
    <scope>PHOSPHORYLATION [LARGE SCALE ANALYSIS] AT SER-254; SER-255 AND SER-257</scope>
    <scope>IDENTIFICATION BY MASS SPECTROMETRY [LARGE SCALE ANALYSIS]</scope>
    <source>
        <tissue>Brain</tissue>
        <tissue>Brown adipose tissue</tissue>
        <tissue>Kidney</tissue>
        <tissue>Lung</tissue>
        <tissue>Spleen</tissue>
        <tissue>Testis</tissue>
    </source>
</reference>